<proteinExistence type="inferred from homology"/>
<accession>Q2G218</accession>
<evidence type="ECO:0000250" key="1">
    <source>
        <dbReference type="UniProtKB" id="Q5HJD7"/>
    </source>
</evidence>
<evidence type="ECO:0000255" key="2">
    <source>
        <dbReference type="HAMAP-Rule" id="MF_00488"/>
    </source>
</evidence>
<evidence type="ECO:0000305" key="3"/>
<sequence>MNKFKGNKVVLIGNGAVGSSYAFSLVNQSIVDELVIIDLDTEKVRGDVMDLKHATPYSPTTVRVKAGEYSDCHDADLVVICAGAAQKPGETRLDLVSKNLKIFKSIVGEVMASKFDGIFLVATNPVDILAYATWKFSGLPKERVIGSGTILDSARFRLLLSEAFDVAPRSVDAQIIGEHGDTELPVWSHANIAGQPLKTLLEQRPEGKAQIEQIFVQTRDAAYDIIQAKGATYYGVAMGLARITEAIFRNEDAVLTVSALLEGEYEEEDVYIGVPAVINRNGIRNVVEIPLNDEEQSKFAHSAKTLKDIMAEAEELK</sequence>
<reference key="1">
    <citation type="book" date="2006" name="Gram positive pathogens, 2nd edition">
        <title>The Staphylococcus aureus NCTC 8325 genome.</title>
        <editorList>
            <person name="Fischetti V."/>
            <person name="Novick R."/>
            <person name="Ferretti J."/>
            <person name="Portnoy D."/>
            <person name="Rood J."/>
        </editorList>
        <authorList>
            <person name="Gillaspy A.F."/>
            <person name="Worrell V."/>
            <person name="Orvis J."/>
            <person name="Roe B.A."/>
            <person name="Dyer D.W."/>
            <person name="Iandolo J.J."/>
        </authorList>
    </citation>
    <scope>NUCLEOTIDE SEQUENCE [LARGE SCALE GENOMIC DNA]</scope>
    <source>
        <strain>NCTC 8325 / PS 47</strain>
    </source>
</reference>
<comment type="function">
    <text evidence="1 2">Catalyzes the conversion of lactate to pyruvate (Potential). Appears to be the primary factor that allows S.aureus growth during nitrosative stress in both aerobically and anaerobically cultured cells (By similarity).</text>
</comment>
<comment type="catalytic activity">
    <reaction evidence="2">
        <text>(S)-lactate + NAD(+) = pyruvate + NADH + H(+)</text>
        <dbReference type="Rhea" id="RHEA:23444"/>
        <dbReference type="ChEBI" id="CHEBI:15361"/>
        <dbReference type="ChEBI" id="CHEBI:15378"/>
        <dbReference type="ChEBI" id="CHEBI:16651"/>
        <dbReference type="ChEBI" id="CHEBI:57540"/>
        <dbReference type="ChEBI" id="CHEBI:57945"/>
        <dbReference type="EC" id="1.1.1.27"/>
    </reaction>
</comment>
<comment type="pathway">
    <text evidence="2">Fermentation; pyruvate fermentation to lactate; (S)-lactate from pyruvate: step 1/1.</text>
</comment>
<comment type="subunit">
    <text evidence="2">Homotetramer.</text>
</comment>
<comment type="subcellular location">
    <subcellularLocation>
        <location evidence="2">Cytoplasm</location>
    </subcellularLocation>
</comment>
<comment type="similarity">
    <text evidence="2 3">Belongs to the LDH/MDH superfamily. LDH family.</text>
</comment>
<comment type="sequence caution" evidence="3">
    <conflict type="erroneous initiation">
        <sequence resource="EMBL-CDS" id="ABD29384"/>
    </conflict>
</comment>
<dbReference type="EC" id="1.1.1.27" evidence="2"/>
<dbReference type="EMBL" id="CP000253">
    <property type="protein sequence ID" value="ABD29384.1"/>
    <property type="status" value="ALT_INIT"/>
    <property type="molecule type" value="Genomic_DNA"/>
</dbReference>
<dbReference type="RefSeq" id="WP_001031882.1">
    <property type="nucleotide sequence ID" value="NZ_LS483365.1"/>
</dbReference>
<dbReference type="RefSeq" id="WP_011443614.1">
    <property type="nucleotide sequence ID" value="NC_007795.1"/>
</dbReference>
<dbReference type="RefSeq" id="YP_498803.1">
    <property type="nucleotide sequence ID" value="NC_007795.1"/>
</dbReference>
<dbReference type="SMR" id="Q2G218"/>
<dbReference type="STRING" id="93061.SAOUHSC_00206"/>
<dbReference type="PaxDb" id="1280-SAXN108_0219"/>
<dbReference type="GeneID" id="3920362"/>
<dbReference type="KEGG" id="sao:SAOUHSC_00206"/>
<dbReference type="PATRIC" id="fig|93061.5.peg.190"/>
<dbReference type="eggNOG" id="COG0039">
    <property type="taxonomic scope" value="Bacteria"/>
</dbReference>
<dbReference type="HOGENOM" id="CLU_045401_1_1_9"/>
<dbReference type="OrthoDB" id="9802969at2"/>
<dbReference type="UniPathway" id="UPA00554">
    <property type="reaction ID" value="UER00611"/>
</dbReference>
<dbReference type="Proteomes" id="UP000008816">
    <property type="component" value="Chromosome"/>
</dbReference>
<dbReference type="GO" id="GO:0005737">
    <property type="term" value="C:cytoplasm"/>
    <property type="evidence" value="ECO:0007669"/>
    <property type="project" value="UniProtKB-SubCell"/>
</dbReference>
<dbReference type="GO" id="GO:0004459">
    <property type="term" value="F:L-lactate dehydrogenase activity"/>
    <property type="evidence" value="ECO:0000318"/>
    <property type="project" value="GO_Central"/>
</dbReference>
<dbReference type="GO" id="GO:0006096">
    <property type="term" value="P:glycolytic process"/>
    <property type="evidence" value="ECO:0007669"/>
    <property type="project" value="UniProtKB-UniRule"/>
</dbReference>
<dbReference type="GO" id="GO:0006089">
    <property type="term" value="P:lactate metabolic process"/>
    <property type="evidence" value="ECO:0000318"/>
    <property type="project" value="GO_Central"/>
</dbReference>
<dbReference type="GO" id="GO:0006090">
    <property type="term" value="P:pyruvate metabolic process"/>
    <property type="evidence" value="ECO:0000318"/>
    <property type="project" value="GO_Central"/>
</dbReference>
<dbReference type="CDD" id="cd05291">
    <property type="entry name" value="HicDH_like"/>
    <property type="match status" value="1"/>
</dbReference>
<dbReference type="FunFam" id="3.40.50.720:FF:000018">
    <property type="entry name" value="Malate dehydrogenase"/>
    <property type="match status" value="1"/>
</dbReference>
<dbReference type="Gene3D" id="3.90.110.10">
    <property type="entry name" value="Lactate dehydrogenase/glycoside hydrolase, family 4, C-terminal"/>
    <property type="match status" value="1"/>
</dbReference>
<dbReference type="Gene3D" id="3.40.50.720">
    <property type="entry name" value="NAD(P)-binding Rossmann-like Domain"/>
    <property type="match status" value="1"/>
</dbReference>
<dbReference type="HAMAP" id="MF_00488">
    <property type="entry name" value="Lactate_dehydrog"/>
    <property type="match status" value="1"/>
</dbReference>
<dbReference type="InterPro" id="IPR001557">
    <property type="entry name" value="L-lactate/malate_DH"/>
</dbReference>
<dbReference type="InterPro" id="IPR011304">
    <property type="entry name" value="L-lactate_DH"/>
</dbReference>
<dbReference type="InterPro" id="IPR018177">
    <property type="entry name" value="L-lactate_DH_AS"/>
</dbReference>
<dbReference type="InterPro" id="IPR022383">
    <property type="entry name" value="Lactate/malate_DH_C"/>
</dbReference>
<dbReference type="InterPro" id="IPR001236">
    <property type="entry name" value="Lactate/malate_DH_N"/>
</dbReference>
<dbReference type="InterPro" id="IPR015955">
    <property type="entry name" value="Lactate_DH/Glyco_Ohase_4_C"/>
</dbReference>
<dbReference type="InterPro" id="IPR036291">
    <property type="entry name" value="NAD(P)-bd_dom_sf"/>
</dbReference>
<dbReference type="NCBIfam" id="TIGR01771">
    <property type="entry name" value="L-LDH-NAD"/>
    <property type="match status" value="1"/>
</dbReference>
<dbReference type="NCBIfam" id="NF000824">
    <property type="entry name" value="PRK00066.1"/>
    <property type="match status" value="1"/>
</dbReference>
<dbReference type="NCBIfam" id="NF004863">
    <property type="entry name" value="PRK06223.1"/>
    <property type="match status" value="1"/>
</dbReference>
<dbReference type="PANTHER" id="PTHR43128">
    <property type="entry name" value="L-2-HYDROXYCARBOXYLATE DEHYDROGENASE (NAD(P)(+))"/>
    <property type="match status" value="1"/>
</dbReference>
<dbReference type="PANTHER" id="PTHR43128:SF16">
    <property type="entry name" value="L-LACTATE DEHYDROGENASE"/>
    <property type="match status" value="1"/>
</dbReference>
<dbReference type="Pfam" id="PF02866">
    <property type="entry name" value="Ldh_1_C"/>
    <property type="match status" value="1"/>
</dbReference>
<dbReference type="Pfam" id="PF00056">
    <property type="entry name" value="Ldh_1_N"/>
    <property type="match status" value="1"/>
</dbReference>
<dbReference type="PIRSF" id="PIRSF000102">
    <property type="entry name" value="Lac_mal_DH"/>
    <property type="match status" value="1"/>
</dbReference>
<dbReference type="PRINTS" id="PR00086">
    <property type="entry name" value="LLDHDRGNASE"/>
</dbReference>
<dbReference type="SUPFAM" id="SSF56327">
    <property type="entry name" value="LDH C-terminal domain-like"/>
    <property type="match status" value="1"/>
</dbReference>
<dbReference type="SUPFAM" id="SSF51735">
    <property type="entry name" value="NAD(P)-binding Rossmann-fold domains"/>
    <property type="match status" value="1"/>
</dbReference>
<dbReference type="PROSITE" id="PS00064">
    <property type="entry name" value="L_LDH"/>
    <property type="match status" value="1"/>
</dbReference>
<feature type="chain" id="PRO_0000343840" description="L-lactate dehydrogenase 1">
    <location>
        <begin position="1"/>
        <end position="317"/>
    </location>
</feature>
<feature type="active site" description="Proton acceptor" evidence="2">
    <location>
        <position position="179"/>
    </location>
</feature>
<feature type="binding site" evidence="2">
    <location>
        <position position="17"/>
    </location>
    <ligand>
        <name>NAD(+)</name>
        <dbReference type="ChEBI" id="CHEBI:57540"/>
    </ligand>
</feature>
<feature type="binding site" evidence="2">
    <location>
        <position position="38"/>
    </location>
    <ligand>
        <name>NAD(+)</name>
        <dbReference type="ChEBI" id="CHEBI:57540"/>
    </ligand>
</feature>
<feature type="binding site" evidence="2">
    <location>
        <position position="43"/>
    </location>
    <ligand>
        <name>NAD(+)</name>
        <dbReference type="ChEBI" id="CHEBI:57540"/>
    </ligand>
</feature>
<feature type="binding site" evidence="2">
    <location>
        <position position="69"/>
    </location>
    <ligand>
        <name>NAD(+)</name>
        <dbReference type="ChEBI" id="CHEBI:57540"/>
    </ligand>
</feature>
<feature type="binding site" evidence="2">
    <location>
        <begin position="83"/>
        <end position="84"/>
    </location>
    <ligand>
        <name>NAD(+)</name>
        <dbReference type="ChEBI" id="CHEBI:57540"/>
    </ligand>
</feature>
<feature type="binding site" evidence="2">
    <location>
        <position position="86"/>
    </location>
    <ligand>
        <name>substrate</name>
    </ligand>
</feature>
<feature type="binding site" evidence="2">
    <location>
        <position position="92"/>
    </location>
    <ligand>
        <name>substrate</name>
    </ligand>
</feature>
<feature type="binding site" evidence="2">
    <location>
        <position position="105"/>
    </location>
    <ligand>
        <name>NAD(+)</name>
        <dbReference type="ChEBI" id="CHEBI:57540"/>
    </ligand>
</feature>
<feature type="binding site" evidence="2">
    <location>
        <begin position="122"/>
        <end position="124"/>
    </location>
    <ligand>
        <name>NAD(+)</name>
        <dbReference type="ChEBI" id="CHEBI:57540"/>
    </ligand>
</feature>
<feature type="binding site" evidence="2">
    <location>
        <begin position="124"/>
        <end position="127"/>
    </location>
    <ligand>
        <name>substrate</name>
    </ligand>
</feature>
<feature type="binding site" evidence="2">
    <location>
        <position position="147"/>
    </location>
    <ligand>
        <name>NAD(+)</name>
        <dbReference type="ChEBI" id="CHEBI:57540"/>
    </ligand>
</feature>
<feature type="binding site" evidence="2">
    <location>
        <begin position="152"/>
        <end position="155"/>
    </location>
    <ligand>
        <name>substrate</name>
    </ligand>
</feature>
<feature type="binding site" evidence="2">
    <location>
        <position position="232"/>
    </location>
    <ligand>
        <name>substrate</name>
    </ligand>
</feature>
<feature type="modified residue" description="Phosphotyrosine" evidence="2">
    <location>
        <position position="223"/>
    </location>
</feature>
<protein>
    <recommendedName>
        <fullName evidence="2">L-lactate dehydrogenase 1</fullName>
        <shortName evidence="2">L-LDH 1</shortName>
        <ecNumber evidence="2">1.1.1.27</ecNumber>
    </recommendedName>
</protein>
<keyword id="KW-0963">Cytoplasm</keyword>
<keyword id="KW-0520">NAD</keyword>
<keyword id="KW-0560">Oxidoreductase</keyword>
<keyword id="KW-0597">Phosphoprotein</keyword>
<keyword id="KW-1185">Reference proteome</keyword>
<keyword id="KW-0346">Stress response</keyword>
<organism>
    <name type="scientific">Staphylococcus aureus (strain NCTC 8325 / PS 47)</name>
    <dbReference type="NCBI Taxonomy" id="93061"/>
    <lineage>
        <taxon>Bacteria</taxon>
        <taxon>Bacillati</taxon>
        <taxon>Bacillota</taxon>
        <taxon>Bacilli</taxon>
        <taxon>Bacillales</taxon>
        <taxon>Staphylococcaceae</taxon>
        <taxon>Staphylococcus</taxon>
    </lineage>
</organism>
<name>LDH1_STAA8</name>
<gene>
    <name evidence="2" type="primary">ldh1</name>
    <name type="ordered locus">SAOUHSC_00206</name>
</gene>